<dbReference type="EC" id="1.4.4.2" evidence="1"/>
<dbReference type="EMBL" id="CP000029">
    <property type="protein sequence ID" value="AAW54492.1"/>
    <property type="molecule type" value="Genomic_DNA"/>
</dbReference>
<dbReference type="RefSeq" id="WP_002456181.1">
    <property type="nucleotide sequence ID" value="NC_002976.3"/>
</dbReference>
<dbReference type="SMR" id="Q5HP13"/>
<dbReference type="STRING" id="176279.SERP1101"/>
<dbReference type="GeneID" id="50018661"/>
<dbReference type="KEGG" id="ser:SERP1101"/>
<dbReference type="eggNOG" id="COG0403">
    <property type="taxonomic scope" value="Bacteria"/>
</dbReference>
<dbReference type="HOGENOM" id="CLU_004620_0_2_9"/>
<dbReference type="Proteomes" id="UP000000531">
    <property type="component" value="Chromosome"/>
</dbReference>
<dbReference type="GO" id="GO:0004375">
    <property type="term" value="F:glycine dehydrogenase (decarboxylating) activity"/>
    <property type="evidence" value="ECO:0007669"/>
    <property type="project" value="UniProtKB-EC"/>
</dbReference>
<dbReference type="GO" id="GO:0019464">
    <property type="term" value="P:glycine decarboxylation via glycine cleavage system"/>
    <property type="evidence" value="ECO:0007669"/>
    <property type="project" value="UniProtKB-UniRule"/>
</dbReference>
<dbReference type="GO" id="GO:0009116">
    <property type="term" value="P:nucleoside metabolic process"/>
    <property type="evidence" value="ECO:0007669"/>
    <property type="project" value="InterPro"/>
</dbReference>
<dbReference type="CDD" id="cd00613">
    <property type="entry name" value="GDC-P"/>
    <property type="match status" value="1"/>
</dbReference>
<dbReference type="Gene3D" id="3.90.1150.10">
    <property type="entry name" value="Aspartate Aminotransferase, domain 1"/>
    <property type="match status" value="1"/>
</dbReference>
<dbReference type="Gene3D" id="3.40.640.10">
    <property type="entry name" value="Type I PLP-dependent aspartate aminotransferase-like (Major domain)"/>
    <property type="match status" value="1"/>
</dbReference>
<dbReference type="HAMAP" id="MF_00712">
    <property type="entry name" value="GcvPA"/>
    <property type="match status" value="1"/>
</dbReference>
<dbReference type="InterPro" id="IPR023010">
    <property type="entry name" value="GcvPA"/>
</dbReference>
<dbReference type="InterPro" id="IPR049315">
    <property type="entry name" value="GDC-P_N"/>
</dbReference>
<dbReference type="InterPro" id="IPR020581">
    <property type="entry name" value="GDC_P"/>
</dbReference>
<dbReference type="InterPro" id="IPR015424">
    <property type="entry name" value="PyrdxlP-dep_Trfase"/>
</dbReference>
<dbReference type="InterPro" id="IPR015421">
    <property type="entry name" value="PyrdxlP-dep_Trfase_major"/>
</dbReference>
<dbReference type="InterPro" id="IPR015422">
    <property type="entry name" value="PyrdxlP-dep_Trfase_small"/>
</dbReference>
<dbReference type="NCBIfam" id="NF001696">
    <property type="entry name" value="PRK00451.1"/>
    <property type="match status" value="1"/>
</dbReference>
<dbReference type="PANTHER" id="PTHR42806">
    <property type="entry name" value="GLYCINE CLEAVAGE SYSTEM P-PROTEIN"/>
    <property type="match status" value="1"/>
</dbReference>
<dbReference type="PANTHER" id="PTHR42806:SF1">
    <property type="entry name" value="GLYCINE DEHYDROGENASE (DECARBOXYLATING)"/>
    <property type="match status" value="1"/>
</dbReference>
<dbReference type="Pfam" id="PF02347">
    <property type="entry name" value="GDC-P"/>
    <property type="match status" value="1"/>
</dbReference>
<dbReference type="PIRSF" id="PIRSF006815">
    <property type="entry name" value="GcvPA"/>
    <property type="match status" value="1"/>
</dbReference>
<dbReference type="SUPFAM" id="SSF53383">
    <property type="entry name" value="PLP-dependent transferases"/>
    <property type="match status" value="1"/>
</dbReference>
<keyword id="KW-0560">Oxidoreductase</keyword>
<keyword id="KW-1185">Reference proteome</keyword>
<evidence type="ECO:0000255" key="1">
    <source>
        <dbReference type="HAMAP-Rule" id="MF_00712"/>
    </source>
</evidence>
<protein>
    <recommendedName>
        <fullName evidence="1">Probable glycine dehydrogenase (decarboxylating) subunit 1</fullName>
        <ecNumber evidence="1">1.4.4.2</ecNumber>
    </recommendedName>
    <alternativeName>
        <fullName evidence="1">Glycine cleavage system P-protein subunit 1</fullName>
    </alternativeName>
    <alternativeName>
        <fullName evidence="1">Glycine decarboxylase subunit 1</fullName>
    </alternativeName>
    <alternativeName>
        <fullName evidence="1">Glycine dehydrogenase (aminomethyl-transferring) subunit 1</fullName>
    </alternativeName>
</protein>
<proteinExistence type="inferred from homology"/>
<sequence length="448" mass="49962">MSHRYIPLTEQDKNEMLNSIGAKSISELFDDIPTDILLKRNLNIAESEAETILLRRLNRLAAKNTTKETHATFLGAGVYDHYTPAVVDAMISRSEFYTAYTPYQPEISQGELQAIFEFQTLICELTDMDVANSSMYDGMTSFAEACILALSHTKKNKIVVSSGLHYQALQILHTYAKTRDEFEIIEVDLKGTITDLEKLEQLIDDNTAAVAVQYPNFYGSIEDLEQINNYIKDKKALFIVYANPLSLGLLTPPGTFGADIVVGDTQPFGIPTQFGGPHCGYFATTKKLMRKVPGRLVGQTQDDEGNRGFVLTLQAREQHIRRDKATSNICSNQALNALASSIAMSALGKQGIYEIAVQNLKNANYAKNKFEEHGFEVLKAQSFNEFVVKFNQPIKNINLKLAEYGYIGGFDLGEVSDDFKNHMLVAVTELRSKDEIDDFVTKAGELND</sequence>
<comment type="function">
    <text evidence="1">The glycine cleavage system catalyzes the degradation of glycine. The P protein binds the alpha-amino group of glycine through its pyridoxal phosphate cofactor; CO(2) is released and the remaining methylamine moiety is then transferred to the lipoamide cofactor of the H protein.</text>
</comment>
<comment type="catalytic activity">
    <reaction evidence="1">
        <text>N(6)-[(R)-lipoyl]-L-lysyl-[glycine-cleavage complex H protein] + glycine + H(+) = N(6)-[(R)-S(8)-aminomethyldihydrolipoyl]-L-lysyl-[glycine-cleavage complex H protein] + CO2</text>
        <dbReference type="Rhea" id="RHEA:24304"/>
        <dbReference type="Rhea" id="RHEA-COMP:10494"/>
        <dbReference type="Rhea" id="RHEA-COMP:10495"/>
        <dbReference type="ChEBI" id="CHEBI:15378"/>
        <dbReference type="ChEBI" id="CHEBI:16526"/>
        <dbReference type="ChEBI" id="CHEBI:57305"/>
        <dbReference type="ChEBI" id="CHEBI:83099"/>
        <dbReference type="ChEBI" id="CHEBI:83143"/>
        <dbReference type="EC" id="1.4.4.2"/>
    </reaction>
</comment>
<comment type="subunit">
    <text evidence="1">The glycine cleavage system is composed of four proteins: P, T, L and H. In this organism, the P 'protein' is a heterodimer of two subunits.</text>
</comment>
<comment type="similarity">
    <text evidence="1">Belongs to the GcvP family. N-terminal subunit subfamily.</text>
</comment>
<feature type="chain" id="PRO_0000166977" description="Probable glycine dehydrogenase (decarboxylating) subunit 1">
    <location>
        <begin position="1"/>
        <end position="448"/>
    </location>
</feature>
<accession>Q5HP13</accession>
<name>GCSPA_STAEQ</name>
<gene>
    <name evidence="1" type="primary">gcvPA</name>
    <name type="ordered locus">SERP1101</name>
</gene>
<reference key="1">
    <citation type="journal article" date="2005" name="J. Bacteriol.">
        <title>Insights on evolution of virulence and resistance from the complete genome analysis of an early methicillin-resistant Staphylococcus aureus strain and a biofilm-producing methicillin-resistant Staphylococcus epidermidis strain.</title>
        <authorList>
            <person name="Gill S.R."/>
            <person name="Fouts D.E."/>
            <person name="Archer G.L."/>
            <person name="Mongodin E.F."/>
            <person name="DeBoy R.T."/>
            <person name="Ravel J."/>
            <person name="Paulsen I.T."/>
            <person name="Kolonay J.F."/>
            <person name="Brinkac L.M."/>
            <person name="Beanan M.J."/>
            <person name="Dodson R.J."/>
            <person name="Daugherty S.C."/>
            <person name="Madupu R."/>
            <person name="Angiuoli S.V."/>
            <person name="Durkin A.S."/>
            <person name="Haft D.H."/>
            <person name="Vamathevan J.J."/>
            <person name="Khouri H."/>
            <person name="Utterback T.R."/>
            <person name="Lee C."/>
            <person name="Dimitrov G."/>
            <person name="Jiang L."/>
            <person name="Qin H."/>
            <person name="Weidman J."/>
            <person name="Tran K."/>
            <person name="Kang K.H."/>
            <person name="Hance I.R."/>
            <person name="Nelson K.E."/>
            <person name="Fraser C.M."/>
        </authorList>
    </citation>
    <scope>NUCLEOTIDE SEQUENCE [LARGE SCALE GENOMIC DNA]</scope>
    <source>
        <strain>ATCC 35984 / DSM 28319 / BCRC 17069 / CCUG 31568 / BM 3577 / RP62A</strain>
    </source>
</reference>
<organism>
    <name type="scientific">Staphylococcus epidermidis (strain ATCC 35984 / DSM 28319 / BCRC 17069 / CCUG 31568 / BM 3577 / RP62A)</name>
    <dbReference type="NCBI Taxonomy" id="176279"/>
    <lineage>
        <taxon>Bacteria</taxon>
        <taxon>Bacillati</taxon>
        <taxon>Bacillota</taxon>
        <taxon>Bacilli</taxon>
        <taxon>Bacillales</taxon>
        <taxon>Staphylococcaceae</taxon>
        <taxon>Staphylococcus</taxon>
    </lineage>
</organism>